<dbReference type="EC" id="2.1.2.3" evidence="1"/>
<dbReference type="EC" id="3.5.4.10" evidence="1"/>
<dbReference type="EMBL" id="CP000941">
    <property type="protein sequence ID" value="ACA11966.1"/>
    <property type="molecule type" value="Genomic_DNA"/>
</dbReference>
<dbReference type="RefSeq" id="WP_012337812.1">
    <property type="nucleotide sequence ID" value="NC_010513.1"/>
</dbReference>
<dbReference type="SMR" id="B0U7A0"/>
<dbReference type="KEGG" id="xfm:Xfasm12_0998"/>
<dbReference type="HOGENOM" id="CLU_016316_5_2_6"/>
<dbReference type="UniPathway" id="UPA00074">
    <property type="reaction ID" value="UER00133"/>
</dbReference>
<dbReference type="UniPathway" id="UPA00074">
    <property type="reaction ID" value="UER00135"/>
</dbReference>
<dbReference type="GO" id="GO:0005829">
    <property type="term" value="C:cytosol"/>
    <property type="evidence" value="ECO:0007669"/>
    <property type="project" value="TreeGrafter"/>
</dbReference>
<dbReference type="GO" id="GO:0003937">
    <property type="term" value="F:IMP cyclohydrolase activity"/>
    <property type="evidence" value="ECO:0007669"/>
    <property type="project" value="UniProtKB-UniRule"/>
</dbReference>
<dbReference type="GO" id="GO:0004643">
    <property type="term" value="F:phosphoribosylaminoimidazolecarboxamide formyltransferase activity"/>
    <property type="evidence" value="ECO:0007669"/>
    <property type="project" value="UniProtKB-UniRule"/>
</dbReference>
<dbReference type="GO" id="GO:0006189">
    <property type="term" value="P:'de novo' IMP biosynthetic process"/>
    <property type="evidence" value="ECO:0007669"/>
    <property type="project" value="UniProtKB-UniRule"/>
</dbReference>
<dbReference type="CDD" id="cd01421">
    <property type="entry name" value="IMPCH"/>
    <property type="match status" value="1"/>
</dbReference>
<dbReference type="FunFam" id="3.40.140.20:FF:000001">
    <property type="entry name" value="Bifunctional purine biosynthesis protein PurH"/>
    <property type="match status" value="1"/>
</dbReference>
<dbReference type="FunFam" id="3.40.140.20:FF:000002">
    <property type="entry name" value="Bifunctional purine biosynthesis protein PurH"/>
    <property type="match status" value="1"/>
</dbReference>
<dbReference type="FunFam" id="3.40.50.1380:FF:000001">
    <property type="entry name" value="Bifunctional purine biosynthesis protein PurH"/>
    <property type="match status" value="1"/>
</dbReference>
<dbReference type="Gene3D" id="3.40.140.20">
    <property type="match status" value="2"/>
</dbReference>
<dbReference type="Gene3D" id="3.40.50.1380">
    <property type="entry name" value="Methylglyoxal synthase-like domain"/>
    <property type="match status" value="1"/>
</dbReference>
<dbReference type="HAMAP" id="MF_00139">
    <property type="entry name" value="PurH"/>
    <property type="match status" value="1"/>
</dbReference>
<dbReference type="InterPro" id="IPR024051">
    <property type="entry name" value="AICAR_Tfase_dup_dom_sf"/>
</dbReference>
<dbReference type="InterPro" id="IPR016193">
    <property type="entry name" value="Cytidine_deaminase-like"/>
</dbReference>
<dbReference type="InterPro" id="IPR011607">
    <property type="entry name" value="MGS-like_dom"/>
</dbReference>
<dbReference type="InterPro" id="IPR036914">
    <property type="entry name" value="MGS-like_dom_sf"/>
</dbReference>
<dbReference type="InterPro" id="IPR002695">
    <property type="entry name" value="PurH-like"/>
</dbReference>
<dbReference type="NCBIfam" id="NF002049">
    <property type="entry name" value="PRK00881.1"/>
    <property type="match status" value="1"/>
</dbReference>
<dbReference type="NCBIfam" id="TIGR00355">
    <property type="entry name" value="purH"/>
    <property type="match status" value="1"/>
</dbReference>
<dbReference type="PANTHER" id="PTHR11692:SF0">
    <property type="entry name" value="BIFUNCTIONAL PURINE BIOSYNTHESIS PROTEIN ATIC"/>
    <property type="match status" value="1"/>
</dbReference>
<dbReference type="PANTHER" id="PTHR11692">
    <property type="entry name" value="BIFUNCTIONAL PURINE BIOSYNTHESIS PROTEIN PURH"/>
    <property type="match status" value="1"/>
</dbReference>
<dbReference type="Pfam" id="PF01808">
    <property type="entry name" value="AICARFT_IMPCHas"/>
    <property type="match status" value="1"/>
</dbReference>
<dbReference type="Pfam" id="PF02142">
    <property type="entry name" value="MGS"/>
    <property type="match status" value="1"/>
</dbReference>
<dbReference type="PIRSF" id="PIRSF000414">
    <property type="entry name" value="AICARFT_IMPCHas"/>
    <property type="match status" value="1"/>
</dbReference>
<dbReference type="SMART" id="SM00798">
    <property type="entry name" value="AICARFT_IMPCHas"/>
    <property type="match status" value="1"/>
</dbReference>
<dbReference type="SMART" id="SM00851">
    <property type="entry name" value="MGS"/>
    <property type="match status" value="1"/>
</dbReference>
<dbReference type="SUPFAM" id="SSF53927">
    <property type="entry name" value="Cytidine deaminase-like"/>
    <property type="match status" value="1"/>
</dbReference>
<dbReference type="SUPFAM" id="SSF52335">
    <property type="entry name" value="Methylglyoxal synthase-like"/>
    <property type="match status" value="1"/>
</dbReference>
<dbReference type="PROSITE" id="PS51855">
    <property type="entry name" value="MGS"/>
    <property type="match status" value="1"/>
</dbReference>
<gene>
    <name evidence="1" type="primary">purH</name>
    <name type="ordered locus">Xfasm12_0998</name>
</gene>
<proteinExistence type="inferred from homology"/>
<name>PUR9_XYLFM</name>
<keyword id="KW-0378">Hydrolase</keyword>
<keyword id="KW-0511">Multifunctional enzyme</keyword>
<keyword id="KW-0658">Purine biosynthesis</keyword>
<keyword id="KW-0808">Transferase</keyword>
<organism>
    <name type="scientific">Xylella fastidiosa (strain M12)</name>
    <dbReference type="NCBI Taxonomy" id="405440"/>
    <lineage>
        <taxon>Bacteria</taxon>
        <taxon>Pseudomonadati</taxon>
        <taxon>Pseudomonadota</taxon>
        <taxon>Gammaproteobacteria</taxon>
        <taxon>Lysobacterales</taxon>
        <taxon>Lysobacteraceae</taxon>
        <taxon>Xylella</taxon>
    </lineage>
</organism>
<feature type="chain" id="PRO_1000096110" description="Bifunctional purine biosynthesis protein PurH">
    <location>
        <begin position="1"/>
        <end position="530"/>
    </location>
</feature>
<feature type="domain" description="MGS-like" evidence="2">
    <location>
        <begin position="1"/>
        <end position="149"/>
    </location>
</feature>
<accession>B0U7A0</accession>
<evidence type="ECO:0000255" key="1">
    <source>
        <dbReference type="HAMAP-Rule" id="MF_00139"/>
    </source>
</evidence>
<evidence type="ECO:0000255" key="2">
    <source>
        <dbReference type="PROSITE-ProRule" id="PRU01202"/>
    </source>
</evidence>
<comment type="catalytic activity">
    <reaction evidence="1">
        <text>(6R)-10-formyltetrahydrofolate + 5-amino-1-(5-phospho-beta-D-ribosyl)imidazole-4-carboxamide = 5-formamido-1-(5-phospho-D-ribosyl)imidazole-4-carboxamide + (6S)-5,6,7,8-tetrahydrofolate</text>
        <dbReference type="Rhea" id="RHEA:22192"/>
        <dbReference type="ChEBI" id="CHEBI:57453"/>
        <dbReference type="ChEBI" id="CHEBI:58467"/>
        <dbReference type="ChEBI" id="CHEBI:58475"/>
        <dbReference type="ChEBI" id="CHEBI:195366"/>
        <dbReference type="EC" id="2.1.2.3"/>
    </reaction>
</comment>
<comment type="catalytic activity">
    <reaction evidence="1">
        <text>IMP + H2O = 5-formamido-1-(5-phospho-D-ribosyl)imidazole-4-carboxamide</text>
        <dbReference type="Rhea" id="RHEA:18445"/>
        <dbReference type="ChEBI" id="CHEBI:15377"/>
        <dbReference type="ChEBI" id="CHEBI:58053"/>
        <dbReference type="ChEBI" id="CHEBI:58467"/>
        <dbReference type="EC" id="3.5.4.10"/>
    </reaction>
</comment>
<comment type="pathway">
    <text evidence="1">Purine metabolism; IMP biosynthesis via de novo pathway; 5-formamido-1-(5-phospho-D-ribosyl)imidazole-4-carboxamide from 5-amino-1-(5-phospho-D-ribosyl)imidazole-4-carboxamide (10-formyl THF route): step 1/1.</text>
</comment>
<comment type="pathway">
    <text evidence="1">Purine metabolism; IMP biosynthesis via de novo pathway; IMP from 5-formamido-1-(5-phospho-D-ribosyl)imidazole-4-carboxamide: step 1/1.</text>
</comment>
<comment type="domain">
    <text evidence="1">The IMP cyclohydrolase activity resides in the N-terminal region.</text>
</comment>
<comment type="similarity">
    <text evidence="1">Belongs to the PurH family.</text>
</comment>
<reference key="1">
    <citation type="journal article" date="2010" name="J. Bacteriol.">
        <title>Whole genome sequences of two Xylella fastidiosa strains (M12 and M23) causing almond leaf scorch disease in California.</title>
        <authorList>
            <person name="Chen J."/>
            <person name="Xie G."/>
            <person name="Han S."/>
            <person name="Chertkov O."/>
            <person name="Sims D."/>
            <person name="Civerolo E.L."/>
        </authorList>
    </citation>
    <scope>NUCLEOTIDE SEQUENCE [LARGE SCALE GENOMIC DNA]</scope>
    <source>
        <strain>M12</strain>
    </source>
</reference>
<protein>
    <recommendedName>
        <fullName evidence="1">Bifunctional purine biosynthesis protein PurH</fullName>
    </recommendedName>
    <domain>
        <recommendedName>
            <fullName evidence="1">Phosphoribosylaminoimidazolecarboxamide formyltransferase</fullName>
            <ecNumber evidence="1">2.1.2.3</ecNumber>
        </recommendedName>
        <alternativeName>
            <fullName evidence="1">AICAR transformylase</fullName>
        </alternativeName>
    </domain>
    <domain>
        <recommendedName>
            <fullName evidence="1">IMP cyclohydrolase</fullName>
            <ecNumber evidence="1">3.5.4.10</ecNumber>
        </recommendedName>
        <alternativeName>
            <fullName evidence="1">ATIC</fullName>
        </alternativeName>
        <alternativeName>
            <fullName evidence="1">IMP synthase</fullName>
        </alternativeName>
        <alternativeName>
            <fullName evidence="1">Inosinicase</fullName>
        </alternativeName>
    </domain>
</protein>
<sequence>MASDFLPVHRALLSVSDKTGLVELARVLLAYNIELLSTGGTATIIREAGLPVQDVADLTGFPEMMDGRVKTLHPVVHGGLLGRAGIDDAVMAKHGIAPIDLLILNLYPFEQITAKKDCTLADAVDTIDIGGPAMLRSAAKNFARVAVATSPDQYPDLLAELQEHHGQLSAEKRFALAVAAFNHVAQYDAAISNYLSSVSDMHTTLPLRHEFPAQLNNTFVKMTELRYGENPHQTGAFYRDVHPQPGTLATFQQLQGKRLSYNNLVDADAAWECVRQFEAPACVIVKHANPCGVAVGMACSDAYEAAYATDPTSAFGGIIAFNRTLDAVTMKSILDRQFVEVFIAPYYDADALAYAAKKANVRVLRIPSSAAMKATNQYDFKRIGSGLLVQSADTMHIHSDVLRTVTTLAPTDKQRRDLMFAWRVVKYVKSNAIVYAKDNRTIGIGAGQMSRVYSARIAGIKAADAHLAVTGSVMASDAFFPFRDGIDAAAATGIKAVIQPGGSMRDNEVIAAADEHGIAMLFTGIRHFRH</sequence>